<gene>
    <name evidence="1" type="primary">nagZ</name>
    <name type="synonym">ycfO</name>
    <name type="ordered locus">b1107</name>
    <name type="ordered locus">JW1093</name>
</gene>
<evidence type="ECO:0000255" key="1">
    <source>
        <dbReference type="HAMAP-Rule" id="MF_00364"/>
    </source>
</evidence>
<evidence type="ECO:0000305" key="2"/>
<dbReference type="EC" id="3.2.1.52" evidence="1"/>
<dbReference type="EMBL" id="U00096">
    <property type="protein sequence ID" value="AAC74191.1"/>
    <property type="molecule type" value="Genomic_DNA"/>
</dbReference>
<dbReference type="EMBL" id="AP009048">
    <property type="protein sequence ID" value="BAA35914.1"/>
    <property type="molecule type" value="Genomic_DNA"/>
</dbReference>
<dbReference type="PIR" id="H64854">
    <property type="entry name" value="H64854"/>
</dbReference>
<dbReference type="RefSeq" id="NP_415625.1">
    <property type="nucleotide sequence ID" value="NC_000913.3"/>
</dbReference>
<dbReference type="RefSeq" id="WP_000529320.1">
    <property type="nucleotide sequence ID" value="NZ_SSZK01000019.1"/>
</dbReference>
<dbReference type="SMR" id="P75949"/>
<dbReference type="BioGRID" id="4259534">
    <property type="interactions" value="65"/>
</dbReference>
<dbReference type="FunCoup" id="P75949">
    <property type="interactions" value="417"/>
</dbReference>
<dbReference type="IntAct" id="P75949">
    <property type="interactions" value="8"/>
</dbReference>
<dbReference type="STRING" id="511145.b1107"/>
<dbReference type="CAZy" id="GH3">
    <property type="family name" value="Glycoside Hydrolase Family 3"/>
</dbReference>
<dbReference type="jPOST" id="P75949"/>
<dbReference type="PaxDb" id="511145-b1107"/>
<dbReference type="EnsemblBacteria" id="AAC74191">
    <property type="protein sequence ID" value="AAC74191"/>
    <property type="gene ID" value="b1107"/>
</dbReference>
<dbReference type="GeneID" id="945671"/>
<dbReference type="KEGG" id="ecj:JW1093"/>
<dbReference type="KEGG" id="eco:b1107"/>
<dbReference type="KEGG" id="ecoc:C3026_06680"/>
<dbReference type="PATRIC" id="fig|1411691.4.peg.1160"/>
<dbReference type="EchoBASE" id="EB3207"/>
<dbReference type="eggNOG" id="COG1472">
    <property type="taxonomic scope" value="Bacteria"/>
</dbReference>
<dbReference type="HOGENOM" id="CLU_008392_0_0_6"/>
<dbReference type="InParanoid" id="P75949"/>
<dbReference type="OMA" id="WQMAAEM"/>
<dbReference type="OrthoDB" id="9786661at2"/>
<dbReference type="PhylomeDB" id="P75949"/>
<dbReference type="BioCyc" id="EcoCyc:G6567-MONOMER"/>
<dbReference type="BioCyc" id="MetaCyc:G6567-MONOMER"/>
<dbReference type="UniPathway" id="UPA00544"/>
<dbReference type="PRO" id="PR:P75949"/>
<dbReference type="Proteomes" id="UP000000625">
    <property type="component" value="Chromosome"/>
</dbReference>
<dbReference type="GO" id="GO:0005829">
    <property type="term" value="C:cytosol"/>
    <property type="evidence" value="ECO:0000314"/>
    <property type="project" value="EcoCyc"/>
</dbReference>
<dbReference type="GO" id="GO:0016231">
    <property type="term" value="F:beta-N-acetylglucosaminidase activity"/>
    <property type="evidence" value="ECO:0000314"/>
    <property type="project" value="EcoCyc"/>
</dbReference>
<dbReference type="GO" id="GO:0004563">
    <property type="term" value="F:beta-N-acetylhexosaminidase activity"/>
    <property type="evidence" value="ECO:0000314"/>
    <property type="project" value="EcoCyc"/>
</dbReference>
<dbReference type="GO" id="GO:0005975">
    <property type="term" value="P:carbohydrate metabolic process"/>
    <property type="evidence" value="ECO:0007669"/>
    <property type="project" value="InterPro"/>
</dbReference>
<dbReference type="GO" id="GO:0051301">
    <property type="term" value="P:cell division"/>
    <property type="evidence" value="ECO:0007669"/>
    <property type="project" value="UniProtKB-KW"/>
</dbReference>
<dbReference type="GO" id="GO:0071555">
    <property type="term" value="P:cell wall organization"/>
    <property type="evidence" value="ECO:0007669"/>
    <property type="project" value="UniProtKB-KW"/>
</dbReference>
<dbReference type="GO" id="GO:0009252">
    <property type="term" value="P:peptidoglycan biosynthetic process"/>
    <property type="evidence" value="ECO:0007669"/>
    <property type="project" value="UniProtKB-KW"/>
</dbReference>
<dbReference type="GO" id="GO:0009254">
    <property type="term" value="P:peptidoglycan turnover"/>
    <property type="evidence" value="ECO:0000315"/>
    <property type="project" value="EcoCyc"/>
</dbReference>
<dbReference type="GO" id="GO:0008360">
    <property type="term" value="P:regulation of cell shape"/>
    <property type="evidence" value="ECO:0007669"/>
    <property type="project" value="UniProtKB-KW"/>
</dbReference>
<dbReference type="FunFam" id="3.20.20.300:FF:000001">
    <property type="entry name" value="Beta-hexosaminidase"/>
    <property type="match status" value="1"/>
</dbReference>
<dbReference type="Gene3D" id="3.20.20.300">
    <property type="entry name" value="Glycoside hydrolase, family 3, N-terminal domain"/>
    <property type="match status" value="1"/>
</dbReference>
<dbReference type="HAMAP" id="MF_00364">
    <property type="entry name" value="NagZ"/>
    <property type="match status" value="1"/>
</dbReference>
<dbReference type="InterPro" id="IPR022956">
    <property type="entry name" value="Beta_hexosaminidase_bac"/>
</dbReference>
<dbReference type="InterPro" id="IPR019800">
    <property type="entry name" value="Glyco_hydro_3_AS"/>
</dbReference>
<dbReference type="InterPro" id="IPR001764">
    <property type="entry name" value="Glyco_hydro_3_N"/>
</dbReference>
<dbReference type="InterPro" id="IPR036962">
    <property type="entry name" value="Glyco_hydro_3_N_sf"/>
</dbReference>
<dbReference type="InterPro" id="IPR017853">
    <property type="entry name" value="Glycoside_hydrolase_SF"/>
</dbReference>
<dbReference type="InterPro" id="IPR050226">
    <property type="entry name" value="NagZ_Beta-hexosaminidase"/>
</dbReference>
<dbReference type="NCBIfam" id="NF003740">
    <property type="entry name" value="PRK05337.1"/>
    <property type="match status" value="1"/>
</dbReference>
<dbReference type="PANTHER" id="PTHR30480:SF13">
    <property type="entry name" value="BETA-HEXOSAMINIDASE"/>
    <property type="match status" value="1"/>
</dbReference>
<dbReference type="PANTHER" id="PTHR30480">
    <property type="entry name" value="BETA-HEXOSAMINIDASE-RELATED"/>
    <property type="match status" value="1"/>
</dbReference>
<dbReference type="Pfam" id="PF00933">
    <property type="entry name" value="Glyco_hydro_3"/>
    <property type="match status" value="1"/>
</dbReference>
<dbReference type="SUPFAM" id="SSF51445">
    <property type="entry name" value="(Trans)glycosidases"/>
    <property type="match status" value="1"/>
</dbReference>
<dbReference type="PROSITE" id="PS00775">
    <property type="entry name" value="GLYCOSYL_HYDROL_F3"/>
    <property type="match status" value="1"/>
</dbReference>
<feature type="chain" id="PRO_0000210785" description="Beta-hexosaminidase">
    <location>
        <begin position="1"/>
        <end position="341"/>
    </location>
</feature>
<feature type="active site" description="Proton donor/acceptor" evidence="1">
    <location>
        <position position="176"/>
    </location>
</feature>
<feature type="active site" description="Nucleophile" evidence="1">
    <location>
        <position position="248"/>
    </location>
</feature>
<feature type="binding site" evidence="1">
    <location>
        <position position="62"/>
    </location>
    <ligand>
        <name>substrate</name>
    </ligand>
</feature>
<feature type="binding site" evidence="1">
    <location>
        <position position="70"/>
    </location>
    <ligand>
        <name>substrate</name>
    </ligand>
</feature>
<feature type="binding site" evidence="1">
    <location>
        <position position="133"/>
    </location>
    <ligand>
        <name>substrate</name>
    </ligand>
</feature>
<feature type="binding site" evidence="1">
    <location>
        <begin position="163"/>
        <end position="164"/>
    </location>
    <ligand>
        <name>substrate</name>
    </ligand>
</feature>
<feature type="site" description="Important for catalytic activity" evidence="1">
    <location>
        <position position="174"/>
    </location>
</feature>
<sequence length="341" mass="37595">MGPVMLDVEGYELDAEEREILAHPLVGGLILFTRNYHDPAQLRELVRQIRAASRNRLVVAVDQEGGRVQRFREGFTRLPAAQSFAALSGMEEGGKLAQEAGWLMASEMIAMDIDISFAPVLDVGHISAAIGERSYHADPQKALAIASRFIDGMHEAGMKTTGKHFPGHGAVTADSHKETPCDPRPQAEIRAKDMSVFSSLIRENKLDAIMPAHVIYSDVDPRPASGSPYWLKTVLRQELGFDGVIFSDDLSMEGAAIMGSYAERGQASLDAGCDMILVCNNRKGAVSVLDNLSPIKAERVTRLYHKGSFSRQELMDSARWKAISTRLNQLHERWQEEKAGH</sequence>
<comment type="function">
    <text>Plays a role in peptidoglycan recycling by cleaving the terminal beta-1,4-linked N-acetylglucosamine (GlcNAc) from peptide-linked peptidoglycan fragments, giving rise to free GlcNAc, anhydro-N-acetylmuramic acid and anhydro-N-acetylmuramic acid-linked peptides. Cleaves GlcNAc linked beta-1,4 to MurNAc tripeptides.</text>
</comment>
<comment type="catalytic activity">
    <reaction evidence="1">
        <text>Hydrolysis of terminal non-reducing N-acetyl-D-hexosamine residues in N-acetyl-beta-D-hexosaminides.</text>
        <dbReference type="EC" id="3.2.1.52"/>
    </reaction>
</comment>
<comment type="activity regulation">
    <text>Slightly inhibited by GlcNAc and N-acetylmuramic acid and strongly inhibited by N-acetylglucosaminolactone.</text>
</comment>
<comment type="biophysicochemical properties">
    <phDependence>
        <text>Optimum pH is 7.7.</text>
    </phDependence>
</comment>
<comment type="pathway">
    <text evidence="1">Cell wall biogenesis; peptidoglycan recycling.</text>
</comment>
<comment type="subunit">
    <text evidence="2">Monomer.</text>
</comment>
<comment type="subcellular location">
    <subcellularLocation>
        <location>Cytoplasm</location>
    </subcellularLocation>
</comment>
<comment type="similarity">
    <text evidence="1">Belongs to the glycosyl hydrolase 3 family. NagZ subfamily.</text>
</comment>
<protein>
    <recommendedName>
        <fullName evidence="1">Beta-hexosaminidase</fullName>
        <ecNumber evidence="1">3.2.1.52</ecNumber>
    </recommendedName>
    <alternativeName>
        <fullName evidence="1">Beta-N-acetylhexosaminidase</fullName>
    </alternativeName>
    <alternativeName>
        <fullName evidence="1">N-acetyl-beta-glucosaminidase</fullName>
    </alternativeName>
</protein>
<reference key="1">
    <citation type="journal article" date="1996" name="DNA Res.">
        <title>A 718-kb DNA sequence of the Escherichia coli K-12 genome corresponding to the 12.7-28.0 min region on the linkage map.</title>
        <authorList>
            <person name="Oshima T."/>
            <person name="Aiba H."/>
            <person name="Baba T."/>
            <person name="Fujita K."/>
            <person name="Hayashi K."/>
            <person name="Honjo A."/>
            <person name="Ikemoto K."/>
            <person name="Inada T."/>
            <person name="Itoh T."/>
            <person name="Kajihara M."/>
            <person name="Kanai K."/>
            <person name="Kashimoto K."/>
            <person name="Kimura S."/>
            <person name="Kitagawa M."/>
            <person name="Makino K."/>
            <person name="Masuda S."/>
            <person name="Miki T."/>
            <person name="Mizobuchi K."/>
            <person name="Mori H."/>
            <person name="Motomura K."/>
            <person name="Nakamura Y."/>
            <person name="Nashimoto H."/>
            <person name="Nishio Y."/>
            <person name="Saito N."/>
            <person name="Sampei G."/>
            <person name="Seki Y."/>
            <person name="Tagami H."/>
            <person name="Takemoto K."/>
            <person name="Wada C."/>
            <person name="Yamamoto Y."/>
            <person name="Yano M."/>
            <person name="Horiuchi T."/>
        </authorList>
    </citation>
    <scope>NUCLEOTIDE SEQUENCE [LARGE SCALE GENOMIC DNA]</scope>
    <source>
        <strain>K12 / W3110 / ATCC 27325 / DSM 5911</strain>
    </source>
</reference>
<reference key="2">
    <citation type="journal article" date="1997" name="Science">
        <title>The complete genome sequence of Escherichia coli K-12.</title>
        <authorList>
            <person name="Blattner F.R."/>
            <person name="Plunkett G. III"/>
            <person name="Bloch C.A."/>
            <person name="Perna N.T."/>
            <person name="Burland V."/>
            <person name="Riley M."/>
            <person name="Collado-Vides J."/>
            <person name="Glasner J.D."/>
            <person name="Rode C.K."/>
            <person name="Mayhew G.F."/>
            <person name="Gregor J."/>
            <person name="Davis N.W."/>
            <person name="Kirkpatrick H.A."/>
            <person name="Goeden M.A."/>
            <person name="Rose D.J."/>
            <person name="Mau B."/>
            <person name="Shao Y."/>
        </authorList>
    </citation>
    <scope>NUCLEOTIDE SEQUENCE [LARGE SCALE GENOMIC DNA]</scope>
    <source>
        <strain>K12 / MG1655 / ATCC 47076</strain>
    </source>
</reference>
<reference key="3">
    <citation type="journal article" date="2006" name="Mol. Syst. Biol.">
        <title>Highly accurate genome sequences of Escherichia coli K-12 strains MG1655 and W3110.</title>
        <authorList>
            <person name="Hayashi K."/>
            <person name="Morooka N."/>
            <person name="Yamamoto Y."/>
            <person name="Fujita K."/>
            <person name="Isono K."/>
            <person name="Choi S."/>
            <person name="Ohtsubo E."/>
            <person name="Baba T."/>
            <person name="Wanner B.L."/>
            <person name="Mori H."/>
            <person name="Horiuchi T."/>
        </authorList>
    </citation>
    <scope>NUCLEOTIDE SEQUENCE [LARGE SCALE GENOMIC DNA]</scope>
    <source>
        <strain>K12 / W3110 / ATCC 27325 / DSM 5911</strain>
    </source>
</reference>
<reference key="4">
    <citation type="journal article" date="1976" name="J. Bacteriol.">
        <title>Purification and properties of beta-N-acetylglucosaminidase from Escherichia coli.</title>
        <authorList>
            <person name="Yem D.W."/>
            <person name="Wu H.C."/>
        </authorList>
    </citation>
    <scope>CHARACTERIZATION</scope>
    <source>
        <strain>K12</strain>
    </source>
</reference>
<reference key="5">
    <citation type="journal article" date="2000" name="J. Bacteriol.">
        <title>Molecular characterization of the beta-N-acetylglucosaminidase of Escherichia coli and its role in cell wall recycling.</title>
        <authorList>
            <person name="Cheng Q."/>
            <person name="Li H."/>
            <person name="Merdek K."/>
            <person name="Park J.T."/>
        </authorList>
    </citation>
    <scope>CHARACTERIZATION</scope>
    <source>
        <strain>K12</strain>
    </source>
</reference>
<proteinExistence type="evidence at protein level"/>
<keyword id="KW-0131">Cell cycle</keyword>
<keyword id="KW-0132">Cell division</keyword>
<keyword id="KW-0133">Cell shape</keyword>
<keyword id="KW-0961">Cell wall biogenesis/degradation</keyword>
<keyword id="KW-0963">Cytoplasm</keyword>
<keyword id="KW-0326">Glycosidase</keyword>
<keyword id="KW-0378">Hydrolase</keyword>
<keyword id="KW-0573">Peptidoglycan synthesis</keyword>
<keyword id="KW-1185">Reference proteome</keyword>
<organism>
    <name type="scientific">Escherichia coli (strain K12)</name>
    <dbReference type="NCBI Taxonomy" id="83333"/>
    <lineage>
        <taxon>Bacteria</taxon>
        <taxon>Pseudomonadati</taxon>
        <taxon>Pseudomonadota</taxon>
        <taxon>Gammaproteobacteria</taxon>
        <taxon>Enterobacterales</taxon>
        <taxon>Enterobacteriaceae</taxon>
        <taxon>Escherichia</taxon>
    </lineage>
</organism>
<name>NAGZ_ECOLI</name>
<accession>P75949</accession>